<protein>
    <recommendedName>
        <fullName evidence="1">UPF0303 protein Bcep18194_A4700</fullName>
    </recommendedName>
</protein>
<feature type="chain" id="PRO_1000046744" description="UPF0303 protein Bcep18194_A4700">
    <location>
        <begin position="1"/>
        <end position="165"/>
    </location>
</feature>
<dbReference type="EMBL" id="CP000151">
    <property type="protein sequence ID" value="ABB08295.1"/>
    <property type="molecule type" value="Genomic_DNA"/>
</dbReference>
<dbReference type="RefSeq" id="WP_011351856.1">
    <property type="nucleotide sequence ID" value="NZ_CP013404.1"/>
</dbReference>
<dbReference type="SMR" id="Q39GX1"/>
<dbReference type="GeneID" id="45094600"/>
<dbReference type="KEGG" id="bur:Bcep18194_A4700"/>
<dbReference type="HOGENOM" id="CLU_101036_2_2_4"/>
<dbReference type="Proteomes" id="UP000002705">
    <property type="component" value="Chromosome 1"/>
</dbReference>
<dbReference type="Gene3D" id="3.30.450.150">
    <property type="entry name" value="Haem-degrading domain"/>
    <property type="match status" value="1"/>
</dbReference>
<dbReference type="HAMAP" id="MF_00761">
    <property type="entry name" value="UPF0303"/>
    <property type="match status" value="1"/>
</dbReference>
<dbReference type="InterPro" id="IPR005624">
    <property type="entry name" value="PduO/GlcC-like"/>
</dbReference>
<dbReference type="InterPro" id="IPR038084">
    <property type="entry name" value="PduO/GlcC-like_sf"/>
</dbReference>
<dbReference type="InterPro" id="IPR010371">
    <property type="entry name" value="YBR137W-like"/>
</dbReference>
<dbReference type="NCBIfam" id="NF002695">
    <property type="entry name" value="PRK02487.1-4"/>
    <property type="match status" value="1"/>
</dbReference>
<dbReference type="NCBIfam" id="NF002696">
    <property type="entry name" value="PRK02487.1-5"/>
    <property type="match status" value="1"/>
</dbReference>
<dbReference type="PANTHER" id="PTHR28255">
    <property type="match status" value="1"/>
</dbReference>
<dbReference type="PANTHER" id="PTHR28255:SF1">
    <property type="entry name" value="UPF0303 PROTEIN YBR137W"/>
    <property type="match status" value="1"/>
</dbReference>
<dbReference type="Pfam" id="PF03928">
    <property type="entry name" value="HbpS-like"/>
    <property type="match status" value="1"/>
</dbReference>
<dbReference type="PIRSF" id="PIRSF008757">
    <property type="entry name" value="UCP008757"/>
    <property type="match status" value="1"/>
</dbReference>
<dbReference type="SUPFAM" id="SSF143744">
    <property type="entry name" value="GlcG-like"/>
    <property type="match status" value="1"/>
</dbReference>
<proteinExistence type="inferred from homology"/>
<gene>
    <name type="ordered locus">Bcep18194_A4700</name>
</gene>
<name>Y4700_BURL3</name>
<reference key="1">
    <citation type="submission" date="2005-10" db="EMBL/GenBank/DDBJ databases">
        <title>Complete sequence of chromosome 1 of Burkholderia sp. 383.</title>
        <authorList>
            <consortium name="US DOE Joint Genome Institute"/>
            <person name="Copeland A."/>
            <person name="Lucas S."/>
            <person name="Lapidus A."/>
            <person name="Barry K."/>
            <person name="Detter J.C."/>
            <person name="Glavina T."/>
            <person name="Hammon N."/>
            <person name="Israni S."/>
            <person name="Pitluck S."/>
            <person name="Chain P."/>
            <person name="Malfatti S."/>
            <person name="Shin M."/>
            <person name="Vergez L."/>
            <person name="Schmutz J."/>
            <person name="Larimer F."/>
            <person name="Land M."/>
            <person name="Kyrpides N."/>
            <person name="Lykidis A."/>
            <person name="Richardson P."/>
        </authorList>
    </citation>
    <scope>NUCLEOTIDE SEQUENCE [LARGE SCALE GENOMIC DNA]</scope>
    <source>
        <strain>ATCC 17760 / DSM 23089 / LMG 22485 / NCIMB 9086 / R18194 / 383</strain>
    </source>
</reference>
<organism>
    <name type="scientific">Burkholderia lata (strain ATCC 17760 / DSM 23089 / LMG 22485 / NCIMB 9086 / R18194 / 383)</name>
    <dbReference type="NCBI Taxonomy" id="482957"/>
    <lineage>
        <taxon>Bacteria</taxon>
        <taxon>Pseudomonadati</taxon>
        <taxon>Pseudomonadota</taxon>
        <taxon>Betaproteobacteria</taxon>
        <taxon>Burkholderiales</taxon>
        <taxon>Burkholderiaceae</taxon>
        <taxon>Burkholderia</taxon>
        <taxon>Burkholderia cepacia complex</taxon>
    </lineage>
</organism>
<sequence length="165" mass="17562">MDIAHDLQSIGAQEQALVFPHFDPARAWALGNRMHALATSRGHAIAIDIVTFGQPLFYAALAGATPDNADWVRRKRNVVAHFRRSSYAIGLRMQQAGATLADKHGLPIAEYSPHGGSFPLTVAGAGVIGSITASGLPQRADHEFVVEALCAELGHDYAVLALARS</sequence>
<accession>Q39GX1</accession>
<comment type="similarity">
    <text evidence="1">Belongs to the UPF0303 family.</text>
</comment>
<evidence type="ECO:0000255" key="1">
    <source>
        <dbReference type="HAMAP-Rule" id="MF_00761"/>
    </source>
</evidence>